<comment type="catalytic activity">
    <reaction evidence="1">
        <text>(2R)-3-phosphoglycerate + ATP = (2R)-3-phospho-glyceroyl phosphate + ADP</text>
        <dbReference type="Rhea" id="RHEA:14801"/>
        <dbReference type="ChEBI" id="CHEBI:30616"/>
        <dbReference type="ChEBI" id="CHEBI:57604"/>
        <dbReference type="ChEBI" id="CHEBI:58272"/>
        <dbReference type="ChEBI" id="CHEBI:456216"/>
        <dbReference type="EC" id="2.7.2.3"/>
    </reaction>
</comment>
<comment type="pathway">
    <text evidence="1">Carbohydrate degradation; glycolysis; pyruvate from D-glyceraldehyde 3-phosphate: step 2/5.</text>
</comment>
<comment type="subunit">
    <text evidence="1">Monomer.</text>
</comment>
<comment type="subcellular location">
    <subcellularLocation>
        <location evidence="1">Cytoplasm</location>
    </subcellularLocation>
</comment>
<comment type="similarity">
    <text evidence="1">Belongs to the phosphoglycerate kinase family.</text>
</comment>
<dbReference type="EC" id="2.7.2.3" evidence="1"/>
<dbReference type="EMBL" id="AP010918">
    <property type="protein sequence ID" value="BAH25761.1"/>
    <property type="molecule type" value="Genomic_DNA"/>
</dbReference>
<dbReference type="RefSeq" id="WP_003900339.1">
    <property type="nucleotide sequence ID" value="NZ_CP014566.1"/>
</dbReference>
<dbReference type="SMR" id="C1AN82"/>
<dbReference type="KEGG" id="mbt:JTY_1473"/>
<dbReference type="HOGENOM" id="CLU_025427_0_2_11"/>
<dbReference type="UniPathway" id="UPA00109">
    <property type="reaction ID" value="UER00185"/>
</dbReference>
<dbReference type="GO" id="GO:0005829">
    <property type="term" value="C:cytosol"/>
    <property type="evidence" value="ECO:0007669"/>
    <property type="project" value="TreeGrafter"/>
</dbReference>
<dbReference type="GO" id="GO:0043531">
    <property type="term" value="F:ADP binding"/>
    <property type="evidence" value="ECO:0007669"/>
    <property type="project" value="TreeGrafter"/>
</dbReference>
<dbReference type="GO" id="GO:0005524">
    <property type="term" value="F:ATP binding"/>
    <property type="evidence" value="ECO:0007669"/>
    <property type="project" value="UniProtKB-KW"/>
</dbReference>
<dbReference type="GO" id="GO:0004618">
    <property type="term" value="F:phosphoglycerate kinase activity"/>
    <property type="evidence" value="ECO:0007669"/>
    <property type="project" value="UniProtKB-UniRule"/>
</dbReference>
<dbReference type="GO" id="GO:0006094">
    <property type="term" value="P:gluconeogenesis"/>
    <property type="evidence" value="ECO:0007669"/>
    <property type="project" value="TreeGrafter"/>
</dbReference>
<dbReference type="GO" id="GO:0006096">
    <property type="term" value="P:glycolytic process"/>
    <property type="evidence" value="ECO:0007669"/>
    <property type="project" value="UniProtKB-UniRule"/>
</dbReference>
<dbReference type="CDD" id="cd00318">
    <property type="entry name" value="Phosphoglycerate_kinase"/>
    <property type="match status" value="1"/>
</dbReference>
<dbReference type="FunFam" id="3.40.50.1260:FF:000006">
    <property type="entry name" value="Phosphoglycerate kinase"/>
    <property type="match status" value="1"/>
</dbReference>
<dbReference type="FunFam" id="3.40.50.1260:FF:000031">
    <property type="entry name" value="Phosphoglycerate kinase 1"/>
    <property type="match status" value="1"/>
</dbReference>
<dbReference type="Gene3D" id="3.40.50.1260">
    <property type="entry name" value="Phosphoglycerate kinase, N-terminal domain"/>
    <property type="match status" value="2"/>
</dbReference>
<dbReference type="HAMAP" id="MF_00145">
    <property type="entry name" value="Phosphoglyc_kinase"/>
    <property type="match status" value="1"/>
</dbReference>
<dbReference type="InterPro" id="IPR001576">
    <property type="entry name" value="Phosphoglycerate_kinase"/>
</dbReference>
<dbReference type="InterPro" id="IPR015911">
    <property type="entry name" value="Phosphoglycerate_kinase_CS"/>
</dbReference>
<dbReference type="InterPro" id="IPR015824">
    <property type="entry name" value="Phosphoglycerate_kinase_N"/>
</dbReference>
<dbReference type="InterPro" id="IPR036043">
    <property type="entry name" value="Phosphoglycerate_kinase_sf"/>
</dbReference>
<dbReference type="PANTHER" id="PTHR11406">
    <property type="entry name" value="PHOSPHOGLYCERATE KINASE"/>
    <property type="match status" value="1"/>
</dbReference>
<dbReference type="PANTHER" id="PTHR11406:SF23">
    <property type="entry name" value="PHOSPHOGLYCERATE KINASE 1, CHLOROPLASTIC-RELATED"/>
    <property type="match status" value="1"/>
</dbReference>
<dbReference type="Pfam" id="PF00162">
    <property type="entry name" value="PGK"/>
    <property type="match status" value="1"/>
</dbReference>
<dbReference type="PIRSF" id="PIRSF000724">
    <property type="entry name" value="Pgk"/>
    <property type="match status" value="1"/>
</dbReference>
<dbReference type="PRINTS" id="PR00477">
    <property type="entry name" value="PHGLYCKINASE"/>
</dbReference>
<dbReference type="SUPFAM" id="SSF53748">
    <property type="entry name" value="Phosphoglycerate kinase"/>
    <property type="match status" value="1"/>
</dbReference>
<dbReference type="PROSITE" id="PS00111">
    <property type="entry name" value="PGLYCERATE_KINASE"/>
    <property type="match status" value="1"/>
</dbReference>
<name>PGK_MYCBT</name>
<accession>C1AN82</accession>
<organism>
    <name type="scientific">Mycobacterium bovis (strain BCG / Tokyo 172 / ATCC 35737 / TMC 1019)</name>
    <dbReference type="NCBI Taxonomy" id="561275"/>
    <lineage>
        <taxon>Bacteria</taxon>
        <taxon>Bacillati</taxon>
        <taxon>Actinomycetota</taxon>
        <taxon>Actinomycetes</taxon>
        <taxon>Mycobacteriales</taxon>
        <taxon>Mycobacteriaceae</taxon>
        <taxon>Mycobacterium</taxon>
        <taxon>Mycobacterium tuberculosis complex</taxon>
    </lineage>
</organism>
<proteinExistence type="inferred from homology"/>
<feature type="chain" id="PRO_1000192838" description="Phosphoglycerate kinase">
    <location>
        <begin position="1"/>
        <end position="412"/>
    </location>
</feature>
<feature type="binding site" evidence="1">
    <location>
        <begin position="24"/>
        <end position="26"/>
    </location>
    <ligand>
        <name>substrate</name>
    </ligand>
</feature>
<feature type="binding site" evidence="1">
    <location>
        <position position="40"/>
    </location>
    <ligand>
        <name>substrate</name>
    </ligand>
</feature>
<feature type="binding site" evidence="1">
    <location>
        <begin position="63"/>
        <end position="66"/>
    </location>
    <ligand>
        <name>substrate</name>
    </ligand>
</feature>
<feature type="binding site" evidence="1">
    <location>
        <position position="122"/>
    </location>
    <ligand>
        <name>substrate</name>
    </ligand>
</feature>
<feature type="binding site" evidence="1">
    <location>
        <position position="162"/>
    </location>
    <ligand>
        <name>substrate</name>
    </ligand>
</feature>
<feature type="binding site" evidence="1">
    <location>
        <position position="212"/>
    </location>
    <ligand>
        <name>ATP</name>
        <dbReference type="ChEBI" id="CHEBI:30616"/>
    </ligand>
</feature>
<feature type="binding site" evidence="1">
    <location>
        <position position="300"/>
    </location>
    <ligand>
        <name>ATP</name>
        <dbReference type="ChEBI" id="CHEBI:30616"/>
    </ligand>
</feature>
<feature type="binding site" evidence="1">
    <location>
        <position position="331"/>
    </location>
    <ligand>
        <name>ATP</name>
        <dbReference type="ChEBI" id="CHEBI:30616"/>
    </ligand>
</feature>
<feature type="binding site" evidence="1">
    <location>
        <begin position="360"/>
        <end position="363"/>
    </location>
    <ligand>
        <name>ATP</name>
        <dbReference type="ChEBI" id="CHEBI:30616"/>
    </ligand>
</feature>
<sequence>MSVANLKDLLAEGVSGRGVLVRSDLNVPLDEDGTITDAGRIIASAPTLKALLDADAKVVVAAHLGRPKDGPDPTLSLAPVAVALGEQLGRHVQLAGDVVGADALARAEGLTGGDILLLENIRFDKRETSKNDDDRRALAKQLVELVGTGGVFVSDGFGVVHRKQASVYDIATLLPHYAGTLVADEMRVLEQLTSSTQRPYAVVLGGSKVSDKLGVIESLATKADSIVIGGGMCFTFLAAQGFSVGTSLLEDDMIEVCRGLLETYHDVLRLPVDLVVTEKFAADSPPQTVDVGAVPNGLMGLDIGPGSIKRFSTLLSNAGTIFWNGPMGVFEFPAYAAGTRGVAEAIVAATGKGAFSVVGGGDSAAAVRAMNIPEGAFSHISTGGGASLEYLEGKTLPGIEVLSREQPTGGVL</sequence>
<gene>
    <name evidence="1" type="primary">pgk</name>
    <name type="ordered locus">JTY_1473</name>
</gene>
<evidence type="ECO:0000255" key="1">
    <source>
        <dbReference type="HAMAP-Rule" id="MF_00145"/>
    </source>
</evidence>
<protein>
    <recommendedName>
        <fullName evidence="1">Phosphoglycerate kinase</fullName>
        <ecNumber evidence="1">2.7.2.3</ecNumber>
    </recommendedName>
</protein>
<keyword id="KW-0067">ATP-binding</keyword>
<keyword id="KW-0963">Cytoplasm</keyword>
<keyword id="KW-0324">Glycolysis</keyword>
<keyword id="KW-0418">Kinase</keyword>
<keyword id="KW-0547">Nucleotide-binding</keyword>
<keyword id="KW-0808">Transferase</keyword>
<reference key="1">
    <citation type="journal article" date="2009" name="Vaccine">
        <title>Whole genome sequence analysis of Mycobacterium bovis bacillus Calmette-Guerin (BCG) Tokyo 172: a comparative study of BCG vaccine substrains.</title>
        <authorList>
            <person name="Seki M."/>
            <person name="Honda I."/>
            <person name="Fujita I."/>
            <person name="Yano I."/>
            <person name="Yamamoto S."/>
            <person name="Koyama A."/>
        </authorList>
    </citation>
    <scope>NUCLEOTIDE SEQUENCE [LARGE SCALE GENOMIC DNA]</scope>
    <source>
        <strain>BCG / Tokyo 172 / ATCC 35737 / TMC 1019</strain>
    </source>
</reference>